<dbReference type="EMBL" id="CP000725">
    <property type="protein sequence ID" value="ABV09730.1"/>
    <property type="molecule type" value="Genomic_DNA"/>
</dbReference>
<dbReference type="RefSeq" id="WP_012000629.1">
    <property type="nucleotide sequence ID" value="NC_009785.1"/>
</dbReference>
<dbReference type="SMR" id="A8AXK6"/>
<dbReference type="STRING" id="467705.SGO_1229"/>
<dbReference type="KEGG" id="sgo:SGO_1229"/>
<dbReference type="eggNOG" id="COG2003">
    <property type="taxonomic scope" value="Bacteria"/>
</dbReference>
<dbReference type="HOGENOM" id="CLU_073529_0_2_9"/>
<dbReference type="Proteomes" id="UP000001131">
    <property type="component" value="Chromosome"/>
</dbReference>
<dbReference type="GO" id="GO:0046872">
    <property type="term" value="F:metal ion binding"/>
    <property type="evidence" value="ECO:0007669"/>
    <property type="project" value="UniProtKB-KW"/>
</dbReference>
<dbReference type="GO" id="GO:0008237">
    <property type="term" value="F:metallopeptidase activity"/>
    <property type="evidence" value="ECO:0007669"/>
    <property type="project" value="UniProtKB-KW"/>
</dbReference>
<dbReference type="GO" id="GO:0006508">
    <property type="term" value="P:proteolysis"/>
    <property type="evidence" value="ECO:0007669"/>
    <property type="project" value="UniProtKB-KW"/>
</dbReference>
<dbReference type="CDD" id="cd08071">
    <property type="entry name" value="MPN_DUF2466"/>
    <property type="match status" value="1"/>
</dbReference>
<dbReference type="Gene3D" id="3.40.140.10">
    <property type="entry name" value="Cytidine Deaminase, domain 2"/>
    <property type="match status" value="1"/>
</dbReference>
<dbReference type="InterPro" id="IPR037518">
    <property type="entry name" value="MPN"/>
</dbReference>
<dbReference type="InterPro" id="IPR025657">
    <property type="entry name" value="RadC_JAB"/>
</dbReference>
<dbReference type="InterPro" id="IPR001405">
    <property type="entry name" value="UPF0758"/>
</dbReference>
<dbReference type="InterPro" id="IPR020891">
    <property type="entry name" value="UPF0758_CS"/>
</dbReference>
<dbReference type="InterPro" id="IPR046778">
    <property type="entry name" value="UPF0758_N"/>
</dbReference>
<dbReference type="NCBIfam" id="NF000642">
    <property type="entry name" value="PRK00024.1"/>
    <property type="match status" value="1"/>
</dbReference>
<dbReference type="NCBIfam" id="TIGR00608">
    <property type="entry name" value="radc"/>
    <property type="match status" value="1"/>
</dbReference>
<dbReference type="PANTHER" id="PTHR30471">
    <property type="entry name" value="DNA REPAIR PROTEIN RADC"/>
    <property type="match status" value="1"/>
</dbReference>
<dbReference type="PANTHER" id="PTHR30471:SF3">
    <property type="entry name" value="UPF0758 PROTEIN YEES-RELATED"/>
    <property type="match status" value="1"/>
</dbReference>
<dbReference type="Pfam" id="PF04002">
    <property type="entry name" value="RadC"/>
    <property type="match status" value="1"/>
</dbReference>
<dbReference type="Pfam" id="PF20582">
    <property type="entry name" value="UPF0758_N"/>
    <property type="match status" value="1"/>
</dbReference>
<dbReference type="PROSITE" id="PS50249">
    <property type="entry name" value="MPN"/>
    <property type="match status" value="1"/>
</dbReference>
<dbReference type="PROSITE" id="PS01302">
    <property type="entry name" value="UPF0758"/>
    <property type="match status" value="1"/>
</dbReference>
<protein>
    <recommendedName>
        <fullName>UPF0758 protein SGO_1229</fullName>
    </recommendedName>
</protein>
<evidence type="ECO:0000255" key="1">
    <source>
        <dbReference type="PROSITE-ProRule" id="PRU01182"/>
    </source>
</evidence>
<evidence type="ECO:0000305" key="2"/>
<feature type="chain" id="PRO_1000089853" description="UPF0758 protein SGO_1229">
    <location>
        <begin position="1"/>
        <end position="226"/>
    </location>
</feature>
<feature type="domain" description="MPN" evidence="1">
    <location>
        <begin position="103"/>
        <end position="225"/>
    </location>
</feature>
<feature type="short sequence motif" description="JAMM motif" evidence="1">
    <location>
        <begin position="174"/>
        <end position="187"/>
    </location>
</feature>
<feature type="binding site" evidence="1">
    <location>
        <position position="174"/>
    </location>
    <ligand>
        <name>Zn(2+)</name>
        <dbReference type="ChEBI" id="CHEBI:29105"/>
        <note>catalytic</note>
    </ligand>
</feature>
<feature type="binding site" evidence="1">
    <location>
        <position position="176"/>
    </location>
    <ligand>
        <name>Zn(2+)</name>
        <dbReference type="ChEBI" id="CHEBI:29105"/>
        <note>catalytic</note>
    </ligand>
</feature>
<feature type="binding site" evidence="1">
    <location>
        <position position="187"/>
    </location>
    <ligand>
        <name>Zn(2+)</name>
        <dbReference type="ChEBI" id="CHEBI:29105"/>
        <note>catalytic</note>
    </ligand>
</feature>
<organism>
    <name type="scientific">Streptococcus gordonii (strain Challis / ATCC 35105 / BCRC 15272 / CH1 / DL1 / V288)</name>
    <dbReference type="NCBI Taxonomy" id="467705"/>
    <lineage>
        <taxon>Bacteria</taxon>
        <taxon>Bacillati</taxon>
        <taxon>Bacillota</taxon>
        <taxon>Bacilli</taxon>
        <taxon>Lactobacillales</taxon>
        <taxon>Streptococcaceae</taxon>
        <taxon>Streptococcus</taxon>
    </lineage>
</organism>
<gene>
    <name type="ordered locus">SGO_1229</name>
</gene>
<keyword id="KW-0378">Hydrolase</keyword>
<keyword id="KW-0479">Metal-binding</keyword>
<keyword id="KW-0482">Metalloprotease</keyword>
<keyword id="KW-0645">Protease</keyword>
<keyword id="KW-1185">Reference proteome</keyword>
<keyword id="KW-0862">Zinc</keyword>
<reference key="1">
    <citation type="journal article" date="2007" name="J. Bacteriol.">
        <title>Genome-wide transcriptional changes in Streptococcus gordonii in response to competence signaling peptide.</title>
        <authorList>
            <person name="Vickerman M.M."/>
            <person name="Iobst S."/>
            <person name="Jesionowski A.M."/>
            <person name="Gill S.R."/>
        </authorList>
    </citation>
    <scope>NUCLEOTIDE SEQUENCE [LARGE SCALE GENOMIC DNA]</scope>
    <source>
        <strain>Challis / ATCC 35105 / BCRC 15272 / CH1 / DL1 / V288</strain>
    </source>
</reference>
<sequence length="226" mass="25617">MYSISFQEESLLPRERLVRLGAEQLSNQELLSILIRTGNKKENVFQIASKILSSVSSLTELRHMTLSELQGMSGIGQVKAIELQAMIELGSRISKAENFEGERILSSQKLAKKMQQELSHKKQEHLVALYLNTQNQIIHQQTIFIGSLTRSLAEPREILHYAIKHMATSIILVHNHPSGATRPSRDDDQVTEKIKEACEMMGFVLLDHLIVGGDSYYSYREETDLI</sequence>
<name>Y1229_STRGC</name>
<accession>A8AXK6</accession>
<proteinExistence type="inferred from homology"/>
<comment type="similarity">
    <text evidence="2">Belongs to the UPF0758 family.</text>
</comment>